<reference key="1">
    <citation type="journal article" date="2004" name="Arch. Virol.">
        <title>Analysis of an isolate of Mungbean yellow mosaic virus (MYMV) with a highly variable DNA B component.</title>
        <authorList>
            <person name="Karthikeyan A.S."/>
            <person name="Vanitharani R."/>
            <person name="Balaji V."/>
            <person name="Anuradha S."/>
            <person name="Thillaichidambaram P."/>
            <person name="Shivaprasad P.V."/>
            <person name="Parameswari C."/>
            <person name="Balamani V."/>
            <person name="Saminathan M."/>
            <person name="Veluthambi K."/>
        </authorList>
    </citation>
    <scope>NUCLEOTIDE SEQUENCE [GENOMIC DNA]</scope>
</reference>
<gene>
    <name type="ORF">BC1</name>
    <name type="ORF">BL1</name>
</gene>
<accession>Q9YPS7</accession>
<sequence>MENYSGAVVNNKYVETKSCEYRLTNNEMPIKLQFPSYLEQKTVQIMGKCMKVDHAVIEYRNQVPFNAKGTVIVTIRDTRLSYEQAAQAAFTFPIACNVDLHYFSSSFFSLKDETPWEIVYKVEDSNVIDGTTFAQIKAKLKLSSAKHSTDIRFKPPTINILSKDYTEECVDFWSVEKPKPIRRMLNPGPNQGPYPISGHRPIMLQPGETWATRSSIGRSSSMRYTNNDRPSILDNTSASDADYPLRHLHKLPEASLDPGDSVSQSHSNAMSKREIEDIIETTISKCLISQRSNVNKAL</sequence>
<proteinExistence type="inferred from homology"/>
<organism>
    <name type="scientific">Mungbean yellow mosaic virus (strain Vigna)</name>
    <name type="common">MYMV</name>
    <dbReference type="NCBI Taxonomy" id="223295"/>
    <lineage>
        <taxon>Viruses</taxon>
        <taxon>Monodnaviria</taxon>
        <taxon>Shotokuvirae</taxon>
        <taxon>Cressdnaviricota</taxon>
        <taxon>Repensiviricetes</taxon>
        <taxon>Geplafuvirales</taxon>
        <taxon>Geminiviridae</taxon>
        <taxon>Begomovirus</taxon>
        <taxon>Mungbean yellow mosaic virus</taxon>
    </lineage>
</organism>
<name>MVP_MYMVV</name>
<protein>
    <recommendedName>
        <fullName>Movement protein BC1</fullName>
    </recommendedName>
    <alternativeName>
        <fullName>Movement protein BL1</fullName>
    </alternativeName>
</protein>
<dbReference type="EMBL" id="AJ132574">
    <property type="protein sequence ID" value="CAA10702.1"/>
    <property type="molecule type" value="Genomic_DNA"/>
</dbReference>
<dbReference type="Proteomes" id="UP000007784">
    <property type="component" value="Genome"/>
</dbReference>
<dbReference type="GO" id="GO:0044167">
    <property type="term" value="C:host cell endoplasmic reticulum membrane"/>
    <property type="evidence" value="ECO:0007669"/>
    <property type="project" value="UniProtKB-SubCell"/>
</dbReference>
<dbReference type="GO" id="GO:0020002">
    <property type="term" value="C:host cell plasma membrane"/>
    <property type="evidence" value="ECO:0007669"/>
    <property type="project" value="UniProtKB-SubCell"/>
</dbReference>
<dbReference type="GO" id="GO:0016020">
    <property type="term" value="C:membrane"/>
    <property type="evidence" value="ECO:0007669"/>
    <property type="project" value="UniProtKB-KW"/>
</dbReference>
<dbReference type="GO" id="GO:0003677">
    <property type="term" value="F:DNA binding"/>
    <property type="evidence" value="ECO:0007669"/>
    <property type="project" value="UniProtKB-KW"/>
</dbReference>
<dbReference type="GO" id="GO:0046740">
    <property type="term" value="P:transport of virus in host, cell to cell"/>
    <property type="evidence" value="ECO:0007669"/>
    <property type="project" value="UniProtKB-KW"/>
</dbReference>
<dbReference type="InterPro" id="IPR000211">
    <property type="entry name" value="Gemini_BL"/>
</dbReference>
<dbReference type="Pfam" id="PF00845">
    <property type="entry name" value="Gemini_BL1"/>
    <property type="match status" value="1"/>
</dbReference>
<keyword id="KW-0238">DNA-binding</keyword>
<keyword id="KW-1032">Host cell membrane</keyword>
<keyword id="KW-1038">Host endoplasmic reticulum</keyword>
<keyword id="KW-1043">Host membrane</keyword>
<keyword id="KW-1044">Host microsome</keyword>
<keyword id="KW-0472">Membrane</keyword>
<keyword id="KW-0597">Phosphoprotein</keyword>
<keyword id="KW-1185">Reference proteome</keyword>
<keyword id="KW-0813">Transport</keyword>
<keyword id="KW-0916">Viral movement protein</keyword>
<feature type="chain" id="PRO_0000323697" description="Movement protein BC1">
    <location>
        <begin position="1"/>
        <end position="298"/>
    </location>
</feature>
<comment type="function">
    <text evidence="1">Transports viral genome to neighboring plant cells directly through plasmosdesmata, without any budding. The movement protein allows efficient cell to cell propagation, by bypassing the host cell wall barrier. Begomovirus genome is shuttled out of nucleus by Nuclear shuttle protein (NSP) and the movement protein transports the DNA-NSP complex to cell plasmodesmata and facilitates further movement across the cell wall (By similarity).</text>
</comment>
<comment type="subunit">
    <text evidence="1">Binds to dimeric supercoiled plasmid DNA.</text>
</comment>
<comment type="subcellular location">
    <subcellularLocation>
        <location evidence="1">Host cell membrane</location>
        <topology evidence="1">Peripheral membrane protein</topology>
        <orientation evidence="1">Cytoplasmic side</orientation>
    </subcellularLocation>
    <subcellularLocation>
        <location evidence="1">Host microsome membrane</location>
        <topology evidence="1">Peripheral membrane protein</topology>
        <orientation evidence="1">Cytoplasmic side</orientation>
    </subcellularLocation>
    <subcellularLocation>
        <location evidence="1">Host endoplasmic reticulum membrane</location>
        <topology evidence="1">Peripheral membrane protein</topology>
        <orientation evidence="1">Cytoplasmic side</orientation>
    </subcellularLocation>
    <text evidence="1">Found on ER-derived vesicles.</text>
</comment>
<comment type="PTM">
    <text evidence="1">Phosphorylated.</text>
</comment>
<comment type="similarity">
    <text evidence="2">Belongs to the begomovirus movement protein BC1 family.</text>
</comment>
<evidence type="ECO:0000250" key="1"/>
<evidence type="ECO:0000305" key="2"/>
<organismHost>
    <name type="scientific">Glycine max</name>
    <name type="common">Soybean</name>
    <name type="synonym">Glycine hispida</name>
    <dbReference type="NCBI Taxonomy" id="3847"/>
</organismHost>
<organismHost>
    <name type="scientific">Vigna mungo</name>
    <name type="common">Black gram</name>
    <name type="synonym">Phaseolus mungo</name>
    <dbReference type="NCBI Taxonomy" id="3915"/>
</organismHost>
<organismHost>
    <name type="scientific">Vigna radiata</name>
    <name type="common">Mung bean</name>
    <dbReference type="NCBI Taxonomy" id="157791"/>
</organismHost>
<organismHost>
    <name type="scientific">Vigna radiata var. radiata</name>
    <name type="common">Mung bean</name>
    <name type="synonym">Phaseolus aureus</name>
    <dbReference type="NCBI Taxonomy" id="3916"/>
</organismHost>
<organismHost>
    <name type="scientific">Vigna unguiculata</name>
    <name type="common">Cowpea</name>
    <dbReference type="NCBI Taxonomy" id="3917"/>
</organismHost>